<evidence type="ECO:0000250" key="1"/>
<evidence type="ECO:0000255" key="2"/>
<evidence type="ECO:0000256" key="3">
    <source>
        <dbReference type="SAM" id="MobiDB-lite"/>
    </source>
</evidence>
<evidence type="ECO:0000269" key="4">
    <source>
    </source>
</evidence>
<evidence type="ECO:0000305" key="5"/>
<dbReference type="EMBL" id="AB050885">
    <property type="protein sequence ID" value="BAB39766.1"/>
    <property type="molecule type" value="mRNA"/>
</dbReference>
<dbReference type="EMBL" id="AP003203">
    <property type="protein sequence ID" value="BAB64068.1"/>
    <property type="molecule type" value="Genomic_DNA"/>
</dbReference>
<dbReference type="EMBL" id="AP008207">
    <property type="protein sequence ID" value="BAF05047.1"/>
    <property type="molecule type" value="Genomic_DNA"/>
</dbReference>
<dbReference type="EMBL" id="AP014957">
    <property type="protein sequence ID" value="BAS72320.1"/>
    <property type="molecule type" value="Genomic_DNA"/>
</dbReference>
<dbReference type="EMBL" id="CM000138">
    <property type="protein sequence ID" value="EEE54647.1"/>
    <property type="molecule type" value="Genomic_DNA"/>
</dbReference>
<dbReference type="EMBL" id="AK067297">
    <property type="protein sequence ID" value="BAG90356.1"/>
    <property type="molecule type" value="mRNA"/>
</dbReference>
<dbReference type="RefSeq" id="XP_015622519.1">
    <property type="nucleotide sequence ID" value="XM_015767033.1"/>
</dbReference>
<dbReference type="SMR" id="Q9AVE6"/>
<dbReference type="FunCoup" id="Q9AVE6">
    <property type="interactions" value="479"/>
</dbReference>
<dbReference type="IntAct" id="Q9AVE6">
    <property type="interactions" value="1"/>
</dbReference>
<dbReference type="STRING" id="39947.Q9AVE6"/>
<dbReference type="PaxDb" id="39947-Q9AVE6"/>
<dbReference type="EnsemblPlants" id="Os01t0501700-01">
    <property type="protein sequence ID" value="Os01t0501700-01"/>
    <property type="gene ID" value="Os01g0501700"/>
</dbReference>
<dbReference type="Gramene" id="Os01t0501700-01">
    <property type="protein sequence ID" value="Os01t0501700-01"/>
    <property type="gene ID" value="Os01g0501700"/>
</dbReference>
<dbReference type="KEGG" id="dosa:Os01g0501700"/>
<dbReference type="eggNOG" id="ENOG502QVCB">
    <property type="taxonomic scope" value="Eukaryota"/>
</dbReference>
<dbReference type="HOGENOM" id="CLU_031942_2_0_1"/>
<dbReference type="InParanoid" id="Q9AVE6"/>
<dbReference type="OMA" id="AWAFIAP"/>
<dbReference type="OrthoDB" id="36838at2759"/>
<dbReference type="Proteomes" id="UP000000763">
    <property type="component" value="Chromosome 1"/>
</dbReference>
<dbReference type="Proteomes" id="UP000007752">
    <property type="component" value="Chromosome 1"/>
</dbReference>
<dbReference type="Proteomes" id="UP000059680">
    <property type="component" value="Chromosome 1"/>
</dbReference>
<dbReference type="GO" id="GO:0009535">
    <property type="term" value="C:chloroplast thylakoid membrane"/>
    <property type="evidence" value="ECO:0007669"/>
    <property type="project" value="UniProtKB-SubCell"/>
</dbReference>
<dbReference type="GO" id="GO:0033281">
    <property type="term" value="C:TAT protein transport complex"/>
    <property type="evidence" value="ECO:0000318"/>
    <property type="project" value="GO_Central"/>
</dbReference>
<dbReference type="GO" id="GO:0009977">
    <property type="term" value="F:proton motive force dependent protein transmembrane transporter activity"/>
    <property type="evidence" value="ECO:0000318"/>
    <property type="project" value="GO_Central"/>
</dbReference>
<dbReference type="GO" id="GO:0065002">
    <property type="term" value="P:intracellular protein transmembrane transport"/>
    <property type="evidence" value="ECO:0000318"/>
    <property type="project" value="GO_Central"/>
</dbReference>
<dbReference type="GO" id="GO:0043953">
    <property type="term" value="P:protein transport by the Tat complex"/>
    <property type="evidence" value="ECO:0000318"/>
    <property type="project" value="GO_Central"/>
</dbReference>
<dbReference type="HAMAP" id="MF_00902">
    <property type="entry name" value="TatC"/>
    <property type="match status" value="1"/>
</dbReference>
<dbReference type="InterPro" id="IPR019820">
    <property type="entry name" value="Sec-indep_translocase_CS"/>
</dbReference>
<dbReference type="InterPro" id="IPR002033">
    <property type="entry name" value="TatC"/>
</dbReference>
<dbReference type="NCBIfam" id="TIGR00945">
    <property type="entry name" value="tatC"/>
    <property type="match status" value="1"/>
</dbReference>
<dbReference type="PANTHER" id="PTHR30371">
    <property type="entry name" value="SEC-INDEPENDENT PROTEIN TRANSLOCASE PROTEIN TATC"/>
    <property type="match status" value="1"/>
</dbReference>
<dbReference type="PANTHER" id="PTHR30371:SF0">
    <property type="entry name" value="SEC-INDEPENDENT PROTEIN TRANSLOCASE PROTEIN TATC, CHLOROPLASTIC-RELATED"/>
    <property type="match status" value="1"/>
</dbReference>
<dbReference type="Pfam" id="PF00902">
    <property type="entry name" value="TatC"/>
    <property type="match status" value="1"/>
</dbReference>
<dbReference type="PRINTS" id="PR01840">
    <property type="entry name" value="TATCFAMILY"/>
</dbReference>
<dbReference type="PROSITE" id="PS01218">
    <property type="entry name" value="TATC"/>
    <property type="match status" value="1"/>
</dbReference>
<keyword id="KW-0150">Chloroplast</keyword>
<keyword id="KW-0472">Membrane</keyword>
<keyword id="KW-0934">Plastid</keyword>
<keyword id="KW-0653">Protein transport</keyword>
<keyword id="KW-1185">Reference proteome</keyword>
<keyword id="KW-0793">Thylakoid</keyword>
<keyword id="KW-0809">Transit peptide</keyword>
<keyword id="KW-0811">Translocation</keyword>
<keyword id="KW-0812">Transmembrane</keyword>
<keyword id="KW-1133">Transmembrane helix</keyword>
<keyword id="KW-0813">Transport</keyword>
<feature type="transit peptide" description="Chloroplast" evidence="2">
    <location>
        <begin position="1"/>
        <end position="54"/>
    </location>
</feature>
<feature type="transit peptide" description="Thylakoid" evidence="2">
    <location>
        <begin position="55"/>
        <end status="unknown"/>
    </location>
</feature>
<feature type="chain" id="PRO_0000419913" description="Sec-independent protein translocase protein TATC, chloroplastic">
    <location>
        <begin status="unknown"/>
        <end position="359"/>
    </location>
</feature>
<feature type="topological domain" description="Stromal" evidence="2">
    <location>
        <begin position="55"/>
        <end position="142"/>
    </location>
</feature>
<feature type="transmembrane region" description="Helical" evidence="2">
    <location>
        <begin position="143"/>
        <end position="163"/>
    </location>
</feature>
<feature type="topological domain" description="Lumenal" evidence="2">
    <location>
        <begin position="164"/>
        <end position="198"/>
    </location>
</feature>
<feature type="transmembrane region" description="Helical" evidence="2">
    <location>
        <begin position="199"/>
        <end position="219"/>
    </location>
</feature>
<feature type="topological domain" description="Stromal" evidence="2">
    <location>
        <begin position="220"/>
        <end position="225"/>
    </location>
</feature>
<feature type="transmembrane region" description="Helical" evidence="2">
    <location>
        <begin position="226"/>
        <end position="246"/>
    </location>
</feature>
<feature type="topological domain" description="Lumenal" evidence="2">
    <location>
        <begin position="247"/>
        <end position="276"/>
    </location>
</feature>
<feature type="transmembrane region" description="Helical" evidence="2">
    <location>
        <begin position="277"/>
        <end position="297"/>
    </location>
</feature>
<feature type="topological domain" description="Stromal" evidence="2">
    <location>
        <begin position="298"/>
        <end position="308"/>
    </location>
</feature>
<feature type="transmembrane region" description="Helical" evidence="2">
    <location>
        <begin position="309"/>
        <end position="329"/>
    </location>
</feature>
<feature type="topological domain" description="Lumenal" evidence="2">
    <location>
        <begin position="330"/>
        <end position="333"/>
    </location>
</feature>
<feature type="transmembrane region" description="Helical" evidence="2">
    <location>
        <begin position="334"/>
        <end position="354"/>
    </location>
</feature>
<feature type="topological domain" description="Stromal" evidence="2">
    <location>
        <begin position="355"/>
        <end position="359"/>
    </location>
</feature>
<feature type="region of interest" description="Disordered" evidence="3">
    <location>
        <begin position="1"/>
        <end position="23"/>
    </location>
</feature>
<feature type="region of interest" description="Disordered" evidence="3">
    <location>
        <begin position="59"/>
        <end position="104"/>
    </location>
</feature>
<accession>Q9AVE6</accession>
<accession>A0A0P0V2Z1</accession>
<gene>
    <name type="primary">TATC</name>
    <name type="ordered locus">Os01g0501700</name>
    <name type="ordered locus">LOC_Os01g31680</name>
    <name type="ORF">B1080D07.26</name>
    <name type="ORF">OsJ_01920</name>
</gene>
<proteinExistence type="evidence at transcript level"/>
<name>TATC_ORYSJ</name>
<reference key="1">
    <citation type="journal article" date="2001" name="Plant Physiol.">
        <title>Screening of the rice viviparous mutants generated by endogenous retrotransposon Tos17 insertion. Tagging of a zeaxanthin epoxidase gene and a novel ostatc gene.</title>
        <authorList>
            <person name="Agrawal G.K."/>
            <person name="Yamazaki M."/>
            <person name="Kobayashi M."/>
            <person name="Hirochika R."/>
            <person name="Miyao A."/>
            <person name="Hirochika H."/>
        </authorList>
    </citation>
    <scope>NUCLEOTIDE SEQUENCE [MRNA]</scope>
    <scope>TISSUE SPECIFICITY</scope>
    <scope>DISRUPTION PHENOTYPE</scope>
    <source>
        <strain>cv. Nipponbare</strain>
    </source>
</reference>
<reference key="2">
    <citation type="journal article" date="2002" name="Nature">
        <title>The genome sequence and structure of rice chromosome 1.</title>
        <authorList>
            <person name="Sasaki T."/>
            <person name="Matsumoto T."/>
            <person name="Yamamoto K."/>
            <person name="Sakata K."/>
            <person name="Baba T."/>
            <person name="Katayose Y."/>
            <person name="Wu J."/>
            <person name="Niimura Y."/>
            <person name="Cheng Z."/>
            <person name="Nagamura Y."/>
            <person name="Antonio B.A."/>
            <person name="Kanamori H."/>
            <person name="Hosokawa S."/>
            <person name="Masukawa M."/>
            <person name="Arikawa K."/>
            <person name="Chiden Y."/>
            <person name="Hayashi M."/>
            <person name="Okamoto M."/>
            <person name="Ando T."/>
            <person name="Aoki H."/>
            <person name="Arita K."/>
            <person name="Hamada M."/>
            <person name="Harada C."/>
            <person name="Hijishita S."/>
            <person name="Honda M."/>
            <person name="Ichikawa Y."/>
            <person name="Idonuma A."/>
            <person name="Iijima M."/>
            <person name="Ikeda M."/>
            <person name="Ikeno M."/>
            <person name="Ito S."/>
            <person name="Ito T."/>
            <person name="Ito Y."/>
            <person name="Ito Y."/>
            <person name="Iwabuchi A."/>
            <person name="Kamiya K."/>
            <person name="Karasawa W."/>
            <person name="Katagiri S."/>
            <person name="Kikuta A."/>
            <person name="Kobayashi N."/>
            <person name="Kono I."/>
            <person name="Machita K."/>
            <person name="Maehara T."/>
            <person name="Mizuno H."/>
            <person name="Mizubayashi T."/>
            <person name="Mukai Y."/>
            <person name="Nagasaki H."/>
            <person name="Nakashima M."/>
            <person name="Nakama Y."/>
            <person name="Nakamichi Y."/>
            <person name="Nakamura M."/>
            <person name="Namiki N."/>
            <person name="Negishi M."/>
            <person name="Ohta I."/>
            <person name="Ono N."/>
            <person name="Saji S."/>
            <person name="Sakai K."/>
            <person name="Shibata M."/>
            <person name="Shimokawa T."/>
            <person name="Shomura A."/>
            <person name="Song J."/>
            <person name="Takazaki Y."/>
            <person name="Terasawa K."/>
            <person name="Tsuji K."/>
            <person name="Waki K."/>
            <person name="Yamagata H."/>
            <person name="Yamane H."/>
            <person name="Yoshiki S."/>
            <person name="Yoshihara R."/>
            <person name="Yukawa K."/>
            <person name="Zhong H."/>
            <person name="Iwama H."/>
            <person name="Endo T."/>
            <person name="Ito H."/>
            <person name="Hahn J.H."/>
            <person name="Kim H.-I."/>
            <person name="Eun M.-Y."/>
            <person name="Yano M."/>
            <person name="Jiang J."/>
            <person name="Gojobori T."/>
        </authorList>
    </citation>
    <scope>NUCLEOTIDE SEQUENCE [LARGE SCALE GENOMIC DNA]</scope>
    <source>
        <strain>cv. Nipponbare</strain>
    </source>
</reference>
<reference key="3">
    <citation type="journal article" date="2005" name="Nature">
        <title>The map-based sequence of the rice genome.</title>
        <authorList>
            <consortium name="International rice genome sequencing project (IRGSP)"/>
        </authorList>
    </citation>
    <scope>NUCLEOTIDE SEQUENCE [LARGE SCALE GENOMIC DNA]</scope>
    <source>
        <strain>cv. Nipponbare</strain>
    </source>
</reference>
<reference key="4">
    <citation type="journal article" date="2008" name="Nucleic Acids Res.">
        <title>The rice annotation project database (RAP-DB): 2008 update.</title>
        <authorList>
            <consortium name="The rice annotation project (RAP)"/>
        </authorList>
    </citation>
    <scope>GENOME REANNOTATION</scope>
    <source>
        <strain>cv. Nipponbare</strain>
    </source>
</reference>
<reference key="5">
    <citation type="journal article" date="2013" name="Rice">
        <title>Improvement of the Oryza sativa Nipponbare reference genome using next generation sequence and optical map data.</title>
        <authorList>
            <person name="Kawahara Y."/>
            <person name="de la Bastide M."/>
            <person name="Hamilton J.P."/>
            <person name="Kanamori H."/>
            <person name="McCombie W.R."/>
            <person name="Ouyang S."/>
            <person name="Schwartz D.C."/>
            <person name="Tanaka T."/>
            <person name="Wu J."/>
            <person name="Zhou S."/>
            <person name="Childs K.L."/>
            <person name="Davidson R.M."/>
            <person name="Lin H."/>
            <person name="Quesada-Ocampo L."/>
            <person name="Vaillancourt B."/>
            <person name="Sakai H."/>
            <person name="Lee S.S."/>
            <person name="Kim J."/>
            <person name="Numa H."/>
            <person name="Itoh T."/>
            <person name="Buell C.R."/>
            <person name="Matsumoto T."/>
        </authorList>
    </citation>
    <scope>GENOME REANNOTATION</scope>
    <source>
        <strain>cv. Nipponbare</strain>
    </source>
</reference>
<reference key="6">
    <citation type="journal article" date="2005" name="PLoS Biol.">
        <title>The genomes of Oryza sativa: a history of duplications.</title>
        <authorList>
            <person name="Yu J."/>
            <person name="Wang J."/>
            <person name="Lin W."/>
            <person name="Li S."/>
            <person name="Li H."/>
            <person name="Zhou J."/>
            <person name="Ni P."/>
            <person name="Dong W."/>
            <person name="Hu S."/>
            <person name="Zeng C."/>
            <person name="Zhang J."/>
            <person name="Zhang Y."/>
            <person name="Li R."/>
            <person name="Xu Z."/>
            <person name="Li S."/>
            <person name="Li X."/>
            <person name="Zheng H."/>
            <person name="Cong L."/>
            <person name="Lin L."/>
            <person name="Yin J."/>
            <person name="Geng J."/>
            <person name="Li G."/>
            <person name="Shi J."/>
            <person name="Liu J."/>
            <person name="Lv H."/>
            <person name="Li J."/>
            <person name="Wang J."/>
            <person name="Deng Y."/>
            <person name="Ran L."/>
            <person name="Shi X."/>
            <person name="Wang X."/>
            <person name="Wu Q."/>
            <person name="Li C."/>
            <person name="Ren X."/>
            <person name="Wang J."/>
            <person name="Wang X."/>
            <person name="Li D."/>
            <person name="Liu D."/>
            <person name="Zhang X."/>
            <person name="Ji Z."/>
            <person name="Zhao W."/>
            <person name="Sun Y."/>
            <person name="Zhang Z."/>
            <person name="Bao J."/>
            <person name="Han Y."/>
            <person name="Dong L."/>
            <person name="Ji J."/>
            <person name="Chen P."/>
            <person name="Wu S."/>
            <person name="Liu J."/>
            <person name="Xiao Y."/>
            <person name="Bu D."/>
            <person name="Tan J."/>
            <person name="Yang L."/>
            <person name="Ye C."/>
            <person name="Zhang J."/>
            <person name="Xu J."/>
            <person name="Zhou Y."/>
            <person name="Yu Y."/>
            <person name="Zhang B."/>
            <person name="Zhuang S."/>
            <person name="Wei H."/>
            <person name="Liu B."/>
            <person name="Lei M."/>
            <person name="Yu H."/>
            <person name="Li Y."/>
            <person name="Xu H."/>
            <person name="Wei S."/>
            <person name="He X."/>
            <person name="Fang L."/>
            <person name="Zhang Z."/>
            <person name="Zhang Y."/>
            <person name="Huang X."/>
            <person name="Su Z."/>
            <person name="Tong W."/>
            <person name="Li J."/>
            <person name="Tong Z."/>
            <person name="Li S."/>
            <person name="Ye J."/>
            <person name="Wang L."/>
            <person name="Fang L."/>
            <person name="Lei T."/>
            <person name="Chen C.-S."/>
            <person name="Chen H.-C."/>
            <person name="Xu Z."/>
            <person name="Li H."/>
            <person name="Huang H."/>
            <person name="Zhang F."/>
            <person name="Xu H."/>
            <person name="Li N."/>
            <person name="Zhao C."/>
            <person name="Li S."/>
            <person name="Dong L."/>
            <person name="Huang Y."/>
            <person name="Li L."/>
            <person name="Xi Y."/>
            <person name="Qi Q."/>
            <person name="Li W."/>
            <person name="Zhang B."/>
            <person name="Hu W."/>
            <person name="Zhang Y."/>
            <person name="Tian X."/>
            <person name="Jiao Y."/>
            <person name="Liang X."/>
            <person name="Jin J."/>
            <person name="Gao L."/>
            <person name="Zheng W."/>
            <person name="Hao B."/>
            <person name="Liu S.-M."/>
            <person name="Wang W."/>
            <person name="Yuan L."/>
            <person name="Cao M."/>
            <person name="McDermott J."/>
            <person name="Samudrala R."/>
            <person name="Wang J."/>
            <person name="Wong G.K.-S."/>
            <person name="Yang H."/>
        </authorList>
    </citation>
    <scope>NUCLEOTIDE SEQUENCE [LARGE SCALE GENOMIC DNA]</scope>
    <source>
        <strain>cv. Nipponbare</strain>
    </source>
</reference>
<reference key="7">
    <citation type="journal article" date="2003" name="Science">
        <title>Collection, mapping, and annotation of over 28,000 cDNA clones from japonica rice.</title>
        <authorList>
            <consortium name="The rice full-length cDNA consortium"/>
        </authorList>
    </citation>
    <scope>NUCLEOTIDE SEQUENCE [LARGE SCALE MRNA]</scope>
    <source>
        <strain>cv. Nipponbare</strain>
    </source>
</reference>
<comment type="function">
    <text evidence="1">Part of the twin-arginine translocation (Tat) system that transports large folded proteins containing a characteristic twin-arginine motif in their signal peptide across the thylakoid membrane. Involved in delta pH-dependent protein transport required for chloroplast development, especially thylakoid membrane formation. TATC and TATB mediate precursor recognition, whereas TATA facilitates translocation (By similarity).</text>
</comment>
<comment type="subunit">
    <text evidence="1">In thylakoid membranes, TATC and TATB form a large receptor complex, containing about eight TATC-TATB pairs, which binds the precursor protein. Twin arginine signal peptide promotes pH-triggered docking of TATA oligomers to TATC-TATB receptor complex, inducing a conformational switch of TATA that results in activation of the translocase. TATA dissociates from TATC-TATB upon completion of translocation (By similarity).</text>
</comment>
<comment type="subcellular location">
    <subcellularLocation>
        <location evidence="1">Plastid</location>
        <location evidence="1">Chloroplast thylakoid membrane</location>
        <topology evidence="1">Multi-pass membrane protein</topology>
    </subcellularLocation>
    <text evidence="1">The N-terminus is located in the stroma.</text>
</comment>
<comment type="tissue specificity">
    <text evidence="4">Expressed in leaves and shoots.</text>
</comment>
<comment type="disruption phenotype">
    <text evidence="4">Pale green phenotype. Mutant plants have low levels of chlorophyll, show quick water loss and fail to accumulate ABA under drought.</text>
</comment>
<comment type="similarity">
    <text evidence="5">Belongs to the TatC family.</text>
</comment>
<organism>
    <name type="scientific">Oryza sativa subsp. japonica</name>
    <name type="common">Rice</name>
    <dbReference type="NCBI Taxonomy" id="39947"/>
    <lineage>
        <taxon>Eukaryota</taxon>
        <taxon>Viridiplantae</taxon>
        <taxon>Streptophyta</taxon>
        <taxon>Embryophyta</taxon>
        <taxon>Tracheophyta</taxon>
        <taxon>Spermatophyta</taxon>
        <taxon>Magnoliopsida</taxon>
        <taxon>Liliopsida</taxon>
        <taxon>Poales</taxon>
        <taxon>Poaceae</taxon>
        <taxon>BOP clade</taxon>
        <taxon>Oryzoideae</taxon>
        <taxon>Oryzeae</taxon>
        <taxon>Oryzinae</taxon>
        <taxon>Oryza</taxon>
        <taxon>Oryza sativa</taxon>
    </lineage>
</organism>
<sequence>MGSAGALLSHSPPGLGGFPPRHHHHHRLSVLRCVPLLPSPAPEPLSCRHGRHLRCAAVDGGAGRETERPSPPAPQREESPSGSLGAALEDPSPQPVQNGSFGGITEDEEQSSLYNFLYPSKELLPDDKEMSIFDHLEELRDRIFVSVLAVGAAILGCFAYSKDLIRILEAPVSVQGVRFLQLSPGEFFFTTLKVSGYCGLLLGSPVILYEIIAFVLPGLTRDERKFLGPIVLGSSVLFYLGIFFSYTVLAPAALNFFVNYADGAVESLWSIDQYFEFVLVLLFSTGLSFQVPVIQLLLGQVGLVSSDQMLSIWRYVVVGAVVAAAVLTPSTDPLTQMLLAGPLLGLYLGGAWMVKLTGR</sequence>
<protein>
    <recommendedName>
        <fullName>Sec-independent protein translocase protein TATC, chloroplastic</fullName>
    </recommendedName>
    <alternativeName>
        <fullName>Protein TWIN-ARGININE TRANSLOCATION C</fullName>
        <shortName>OsTATC</shortName>
    </alternativeName>
</protein>